<reference key="1">
    <citation type="submission" date="2007-03" db="EMBL/GenBank/DDBJ databases">
        <title>Complete sequence of Prosthecochloris vibrioformis DSM 265.</title>
        <authorList>
            <consortium name="US DOE Joint Genome Institute"/>
            <person name="Copeland A."/>
            <person name="Lucas S."/>
            <person name="Lapidus A."/>
            <person name="Barry K."/>
            <person name="Detter J.C."/>
            <person name="Glavina del Rio T."/>
            <person name="Hammon N."/>
            <person name="Israni S."/>
            <person name="Pitluck S."/>
            <person name="Schmutz J."/>
            <person name="Larimer F."/>
            <person name="Land M."/>
            <person name="Hauser L."/>
            <person name="Mikhailova N."/>
            <person name="Li T."/>
            <person name="Overmann J."/>
            <person name="Schuster S.C."/>
            <person name="Bryant D.A."/>
            <person name="Richardson P."/>
        </authorList>
    </citation>
    <scope>NUCLEOTIDE SEQUENCE [LARGE SCALE GENOMIC DNA]</scope>
    <source>
        <strain>DSM 265 / 1930</strain>
    </source>
</reference>
<dbReference type="EMBL" id="CP000607">
    <property type="protein sequence ID" value="ABP37341.1"/>
    <property type="molecule type" value="Genomic_DNA"/>
</dbReference>
<dbReference type="SMR" id="A4SFT2"/>
<dbReference type="STRING" id="290318.Cvib_1329"/>
<dbReference type="KEGG" id="pvi:Cvib_1329"/>
<dbReference type="eggNOG" id="COG0261">
    <property type="taxonomic scope" value="Bacteria"/>
</dbReference>
<dbReference type="HOGENOM" id="CLU_061463_3_2_10"/>
<dbReference type="OrthoDB" id="9813334at2"/>
<dbReference type="GO" id="GO:0005737">
    <property type="term" value="C:cytoplasm"/>
    <property type="evidence" value="ECO:0007669"/>
    <property type="project" value="UniProtKB-ARBA"/>
</dbReference>
<dbReference type="GO" id="GO:1990904">
    <property type="term" value="C:ribonucleoprotein complex"/>
    <property type="evidence" value="ECO:0007669"/>
    <property type="project" value="UniProtKB-KW"/>
</dbReference>
<dbReference type="GO" id="GO:0005840">
    <property type="term" value="C:ribosome"/>
    <property type="evidence" value="ECO:0007669"/>
    <property type="project" value="UniProtKB-KW"/>
</dbReference>
<dbReference type="GO" id="GO:0019843">
    <property type="term" value="F:rRNA binding"/>
    <property type="evidence" value="ECO:0007669"/>
    <property type="project" value="UniProtKB-UniRule"/>
</dbReference>
<dbReference type="GO" id="GO:0003735">
    <property type="term" value="F:structural constituent of ribosome"/>
    <property type="evidence" value="ECO:0007669"/>
    <property type="project" value="InterPro"/>
</dbReference>
<dbReference type="GO" id="GO:0006412">
    <property type="term" value="P:translation"/>
    <property type="evidence" value="ECO:0007669"/>
    <property type="project" value="UniProtKB-UniRule"/>
</dbReference>
<dbReference type="HAMAP" id="MF_01363">
    <property type="entry name" value="Ribosomal_bL21"/>
    <property type="match status" value="1"/>
</dbReference>
<dbReference type="InterPro" id="IPR028909">
    <property type="entry name" value="bL21-like"/>
</dbReference>
<dbReference type="InterPro" id="IPR036164">
    <property type="entry name" value="bL21-like_sf"/>
</dbReference>
<dbReference type="InterPro" id="IPR001787">
    <property type="entry name" value="Ribosomal_bL21"/>
</dbReference>
<dbReference type="InterPro" id="IPR018258">
    <property type="entry name" value="Ribosomal_bL21_CS"/>
</dbReference>
<dbReference type="NCBIfam" id="TIGR00061">
    <property type="entry name" value="L21"/>
    <property type="match status" value="1"/>
</dbReference>
<dbReference type="PANTHER" id="PTHR21349">
    <property type="entry name" value="50S RIBOSOMAL PROTEIN L21"/>
    <property type="match status" value="1"/>
</dbReference>
<dbReference type="PANTHER" id="PTHR21349:SF0">
    <property type="entry name" value="LARGE RIBOSOMAL SUBUNIT PROTEIN BL21M"/>
    <property type="match status" value="1"/>
</dbReference>
<dbReference type="Pfam" id="PF00829">
    <property type="entry name" value="Ribosomal_L21p"/>
    <property type="match status" value="1"/>
</dbReference>
<dbReference type="SUPFAM" id="SSF141091">
    <property type="entry name" value="L21p-like"/>
    <property type="match status" value="1"/>
</dbReference>
<dbReference type="PROSITE" id="PS01169">
    <property type="entry name" value="RIBOSOMAL_L21"/>
    <property type="match status" value="1"/>
</dbReference>
<accession>A4SFT2</accession>
<evidence type="ECO:0000255" key="1">
    <source>
        <dbReference type="HAMAP-Rule" id="MF_01363"/>
    </source>
</evidence>
<evidence type="ECO:0000256" key="2">
    <source>
        <dbReference type="SAM" id="MobiDB-lite"/>
    </source>
</evidence>
<evidence type="ECO:0000305" key="3"/>
<proteinExistence type="inferred from homology"/>
<comment type="function">
    <text evidence="1">This protein binds to 23S rRNA in the presence of protein L20.</text>
</comment>
<comment type="subunit">
    <text evidence="1">Part of the 50S ribosomal subunit. Contacts protein L20.</text>
</comment>
<comment type="similarity">
    <text evidence="1">Belongs to the bacterial ribosomal protein bL21 family.</text>
</comment>
<gene>
    <name evidence="1" type="primary">rplU</name>
    <name type="ordered locus">Cvib_1329</name>
</gene>
<protein>
    <recommendedName>
        <fullName evidence="1">Large ribosomal subunit protein bL21</fullName>
    </recommendedName>
    <alternativeName>
        <fullName evidence="3">50S ribosomal protein L21</fullName>
    </alternativeName>
</protein>
<keyword id="KW-0687">Ribonucleoprotein</keyword>
<keyword id="KW-0689">Ribosomal protein</keyword>
<keyword id="KW-0694">RNA-binding</keyword>
<keyword id="KW-0699">rRNA-binding</keyword>
<organism>
    <name type="scientific">Chlorobium phaeovibrioides (strain DSM 265 / 1930)</name>
    <name type="common">Prosthecochloris vibrioformis (strain DSM 265)</name>
    <dbReference type="NCBI Taxonomy" id="290318"/>
    <lineage>
        <taxon>Bacteria</taxon>
        <taxon>Pseudomonadati</taxon>
        <taxon>Chlorobiota</taxon>
        <taxon>Chlorobiia</taxon>
        <taxon>Chlorobiales</taxon>
        <taxon>Chlorobiaceae</taxon>
        <taxon>Chlorobium/Pelodictyon group</taxon>
        <taxon>Chlorobium</taxon>
    </lineage>
</organism>
<name>RL21_CHLPM</name>
<sequence>MQALIKISDKQYLVQKGDTLFVPRQKTDIGGTMEIASMARIDGANTVLNPAETVTAKVLGHVKDDKVVVFKKKRRKRYQSRNGHRQQMTQIEVVSL</sequence>
<feature type="chain" id="PRO_1000086991" description="Large ribosomal subunit protein bL21">
    <location>
        <begin position="1"/>
        <end position="96"/>
    </location>
</feature>
<feature type="region of interest" description="Disordered" evidence="2">
    <location>
        <begin position="73"/>
        <end position="96"/>
    </location>
</feature>
<feature type="compositionally biased region" description="Basic residues" evidence="2">
    <location>
        <begin position="73"/>
        <end position="84"/>
    </location>
</feature>
<feature type="compositionally biased region" description="Polar residues" evidence="2">
    <location>
        <begin position="85"/>
        <end position="96"/>
    </location>
</feature>